<feature type="chain" id="PRO_0000292779" description="Rhamnulokinase">
    <location>
        <begin position="1"/>
        <end position="485"/>
    </location>
</feature>
<feature type="active site" description="Proton acceptor" evidence="1">
    <location>
        <position position="232"/>
    </location>
</feature>
<feature type="binding site" evidence="1">
    <location>
        <begin position="8"/>
        <end position="12"/>
    </location>
    <ligand>
        <name>ATP</name>
        <dbReference type="ChEBI" id="CHEBI:30616"/>
    </ligand>
</feature>
<feature type="binding site" evidence="1">
    <location>
        <position position="78"/>
    </location>
    <ligand>
        <name>substrate</name>
    </ligand>
</feature>
<feature type="binding site" evidence="1">
    <location>
        <begin position="231"/>
        <end position="233"/>
    </location>
    <ligand>
        <name>substrate</name>
    </ligand>
</feature>
<feature type="binding site" evidence="1">
    <location>
        <position position="254"/>
    </location>
    <ligand>
        <name>ATP</name>
        <dbReference type="ChEBI" id="CHEBI:30616"/>
    </ligand>
</feature>
<feature type="binding site" evidence="1">
    <location>
        <position position="291"/>
    </location>
    <ligand>
        <name>substrate</name>
    </ligand>
</feature>
<feature type="binding site" evidence="1">
    <location>
        <position position="299"/>
    </location>
    <ligand>
        <name>ATP</name>
        <dbReference type="ChEBI" id="CHEBI:30616"/>
    </ligand>
</feature>
<feature type="binding site" evidence="1">
    <location>
        <position position="397"/>
    </location>
    <ligand>
        <name>ATP</name>
        <dbReference type="ChEBI" id="CHEBI:30616"/>
    </ligand>
</feature>
<feature type="disulfide bond" evidence="1">
    <location>
        <begin position="348"/>
        <end position="365"/>
    </location>
</feature>
<feature type="disulfide bond" evidence="1">
    <location>
        <begin position="408"/>
        <end position="412"/>
    </location>
</feature>
<name>RHAB_YERPA</name>
<accession>Q1C0V9</accession>
<keyword id="KW-0067">ATP-binding</keyword>
<keyword id="KW-1015">Disulfide bond</keyword>
<keyword id="KW-0418">Kinase</keyword>
<keyword id="KW-0460">Magnesium</keyword>
<keyword id="KW-0547">Nucleotide-binding</keyword>
<keyword id="KW-0684">Rhamnose metabolism</keyword>
<keyword id="KW-0808">Transferase</keyword>
<dbReference type="EC" id="2.7.1.5" evidence="1"/>
<dbReference type="EMBL" id="CP000308">
    <property type="protein sequence ID" value="ABG15913.1"/>
    <property type="status" value="ALT_INIT"/>
    <property type="molecule type" value="Genomic_DNA"/>
</dbReference>
<dbReference type="RefSeq" id="WP_002209105.1">
    <property type="nucleotide sequence ID" value="NZ_CP009906.1"/>
</dbReference>
<dbReference type="SMR" id="Q1C0V9"/>
<dbReference type="GeneID" id="57974275"/>
<dbReference type="KEGG" id="ypa:YPA_3952"/>
<dbReference type="UniPathway" id="UPA00541">
    <property type="reaction ID" value="UER00602"/>
</dbReference>
<dbReference type="Proteomes" id="UP000001971">
    <property type="component" value="Chromosome"/>
</dbReference>
<dbReference type="GO" id="GO:0005829">
    <property type="term" value="C:cytosol"/>
    <property type="evidence" value="ECO:0007669"/>
    <property type="project" value="TreeGrafter"/>
</dbReference>
<dbReference type="GO" id="GO:0005524">
    <property type="term" value="F:ATP binding"/>
    <property type="evidence" value="ECO:0007669"/>
    <property type="project" value="UniProtKB-KW"/>
</dbReference>
<dbReference type="GO" id="GO:0004370">
    <property type="term" value="F:glycerol kinase activity"/>
    <property type="evidence" value="ECO:0007669"/>
    <property type="project" value="TreeGrafter"/>
</dbReference>
<dbReference type="GO" id="GO:0008993">
    <property type="term" value="F:rhamnulokinase activity"/>
    <property type="evidence" value="ECO:0007669"/>
    <property type="project" value="UniProtKB-UniRule"/>
</dbReference>
<dbReference type="GO" id="GO:0006071">
    <property type="term" value="P:glycerol metabolic process"/>
    <property type="evidence" value="ECO:0007669"/>
    <property type="project" value="TreeGrafter"/>
</dbReference>
<dbReference type="GO" id="GO:0019301">
    <property type="term" value="P:rhamnose catabolic process"/>
    <property type="evidence" value="ECO:0007669"/>
    <property type="project" value="UniProtKB-UniRule"/>
</dbReference>
<dbReference type="CDD" id="cd07771">
    <property type="entry name" value="ASKHA_NBD_FGGY_RhaB-like"/>
    <property type="match status" value="1"/>
</dbReference>
<dbReference type="FunFam" id="3.30.420.40:FF:000064">
    <property type="entry name" value="Rhamnulokinase"/>
    <property type="match status" value="1"/>
</dbReference>
<dbReference type="FunFam" id="3.30.420.40:FF:000073">
    <property type="entry name" value="Rhamnulokinase"/>
    <property type="match status" value="1"/>
</dbReference>
<dbReference type="Gene3D" id="3.30.420.40">
    <property type="match status" value="2"/>
</dbReference>
<dbReference type="HAMAP" id="MF_01535">
    <property type="entry name" value="Rhamnulokinase"/>
    <property type="match status" value="1"/>
</dbReference>
<dbReference type="InterPro" id="IPR043129">
    <property type="entry name" value="ATPase_NBD"/>
</dbReference>
<dbReference type="InterPro" id="IPR000577">
    <property type="entry name" value="Carb_kinase_FGGY"/>
</dbReference>
<dbReference type="InterPro" id="IPR018485">
    <property type="entry name" value="FGGY_C"/>
</dbReference>
<dbReference type="InterPro" id="IPR018484">
    <property type="entry name" value="FGGY_N"/>
</dbReference>
<dbReference type="InterPro" id="IPR013449">
    <property type="entry name" value="Rhamnulokinase"/>
</dbReference>
<dbReference type="NCBIfam" id="NF007925">
    <property type="entry name" value="PRK10640.1"/>
    <property type="match status" value="1"/>
</dbReference>
<dbReference type="NCBIfam" id="TIGR02627">
    <property type="entry name" value="rhamnulo_kin"/>
    <property type="match status" value="1"/>
</dbReference>
<dbReference type="PANTHER" id="PTHR10196:SF93">
    <property type="entry name" value="L-RHAMNULOKINASE"/>
    <property type="match status" value="1"/>
</dbReference>
<dbReference type="PANTHER" id="PTHR10196">
    <property type="entry name" value="SUGAR KINASE"/>
    <property type="match status" value="1"/>
</dbReference>
<dbReference type="Pfam" id="PF02782">
    <property type="entry name" value="FGGY_C"/>
    <property type="match status" value="1"/>
</dbReference>
<dbReference type="Pfam" id="PF00370">
    <property type="entry name" value="FGGY_N"/>
    <property type="match status" value="1"/>
</dbReference>
<dbReference type="PIRSF" id="PIRSF000538">
    <property type="entry name" value="GlpK"/>
    <property type="match status" value="1"/>
</dbReference>
<dbReference type="SUPFAM" id="SSF53067">
    <property type="entry name" value="Actin-like ATPase domain"/>
    <property type="match status" value="2"/>
</dbReference>
<organism>
    <name type="scientific">Yersinia pestis bv. Antiqua (strain Antiqua)</name>
    <dbReference type="NCBI Taxonomy" id="360102"/>
    <lineage>
        <taxon>Bacteria</taxon>
        <taxon>Pseudomonadati</taxon>
        <taxon>Pseudomonadota</taxon>
        <taxon>Gammaproteobacteria</taxon>
        <taxon>Enterobacterales</taxon>
        <taxon>Yersiniaceae</taxon>
        <taxon>Yersinia</taxon>
    </lineage>
</organism>
<reference key="1">
    <citation type="journal article" date="2006" name="J. Bacteriol.">
        <title>Complete genome sequence of Yersinia pestis strains Antiqua and Nepal516: evidence of gene reduction in an emerging pathogen.</title>
        <authorList>
            <person name="Chain P.S.G."/>
            <person name="Hu P."/>
            <person name="Malfatti S.A."/>
            <person name="Radnedge L."/>
            <person name="Larimer F."/>
            <person name="Vergez L.M."/>
            <person name="Worsham P."/>
            <person name="Chu M.C."/>
            <person name="Andersen G.L."/>
        </authorList>
    </citation>
    <scope>NUCLEOTIDE SEQUENCE [LARGE SCALE GENOMIC DNA]</scope>
    <source>
        <strain>Antiqua</strain>
    </source>
</reference>
<proteinExistence type="inferred from homology"/>
<evidence type="ECO:0000255" key="1">
    <source>
        <dbReference type="HAMAP-Rule" id="MF_01535"/>
    </source>
</evidence>
<evidence type="ECO:0000305" key="2"/>
<gene>
    <name evidence="1" type="primary">rhaB</name>
    <name type="ordered locus">YPA_3952</name>
</gene>
<protein>
    <recommendedName>
        <fullName evidence="1">Rhamnulokinase</fullName>
        <shortName evidence="1">RhaB</shortName>
        <ecNumber evidence="1">2.7.1.5</ecNumber>
    </recommendedName>
    <alternativeName>
        <fullName evidence="1">ATP:L-rhamnulose phosphotransferase</fullName>
    </alternativeName>
    <alternativeName>
        <fullName evidence="1">L-rhamnulose 1-kinase</fullName>
    </alternativeName>
    <alternativeName>
        <fullName evidence="1">Rhamnulose kinase</fullName>
    </alternativeName>
</protein>
<sequence length="485" mass="53424">MVAIDLGASSGRVMLASYYPGQQQLTLREVCRFTNQIKSIDGSDVWDIDAIEQSIREGLSQLDSEGIALDSIGIDSWGVDFVLLDKQGKRIGQPVSYRDSRTQGVMARAQQTLGSNAIYRRTGIQFLPFNTLYQLRALSEQQPHLLADVAHLLLIPDYLHYRLTGQLNWEYTNASTTQLLNIETGDWDSDLLAYAGVPAHWFAKPGKPGNTIGYWHSANGQQVPVVAVATHDTASAVLAAPLIDADAAYLSSGTWSLMGFESGTPLTHQQAQCSNITNEGGAEGRYRVLKNIMGLWLLQRATDELQIDDLPQLIEQAARQPACRSLINPNDSRFINPPNMCREIQNACREHQFPVPNTAAQLARCIFDSLAMLYRQVAQELATLRGRPISHLHIVGGGCQNQFLNQLCADACGLNVSMGPVEASTLGNIGSQLISLGEVADVTHYRRIVANNFPLHHLSPHDNSDFAAHWLQFQSLSQLPKELCI</sequence>
<comment type="function">
    <text evidence="1">Involved in the catabolism of L-rhamnose (6-deoxy-L-mannose). Catalyzes the transfer of the gamma-phosphate group from ATP to the 1-hydroxyl group of L-rhamnulose to yield L-rhamnulose 1-phosphate.</text>
</comment>
<comment type="catalytic activity">
    <reaction evidence="1">
        <text>L-rhamnulose + ATP = L-rhamnulose 1-phosphate + ADP + H(+)</text>
        <dbReference type="Rhea" id="RHEA:20117"/>
        <dbReference type="ChEBI" id="CHEBI:15378"/>
        <dbReference type="ChEBI" id="CHEBI:17897"/>
        <dbReference type="ChEBI" id="CHEBI:30616"/>
        <dbReference type="ChEBI" id="CHEBI:58313"/>
        <dbReference type="ChEBI" id="CHEBI:456216"/>
        <dbReference type="EC" id="2.7.1.5"/>
    </reaction>
</comment>
<comment type="cofactor">
    <cofactor evidence="1">
        <name>Mg(2+)</name>
        <dbReference type="ChEBI" id="CHEBI:18420"/>
    </cofactor>
</comment>
<comment type="pathway">
    <text evidence="1">Carbohydrate degradation; L-rhamnose degradation; glycerone phosphate from L-rhamnose: step 2/3.</text>
</comment>
<comment type="similarity">
    <text evidence="1">Belongs to the rhamnulokinase family.</text>
</comment>
<comment type="sequence caution" evidence="2">
    <conflict type="erroneous initiation">
        <sequence resource="EMBL-CDS" id="ABG15913"/>
    </conflict>
    <text>Extended N-terminus.</text>
</comment>